<proteinExistence type="evidence at protein level"/>
<reference key="1">
    <citation type="journal article" date="2005" name="Science">
        <title>The transcriptional landscape of the mammalian genome.</title>
        <authorList>
            <person name="Carninci P."/>
            <person name="Kasukawa T."/>
            <person name="Katayama S."/>
            <person name="Gough J."/>
            <person name="Frith M.C."/>
            <person name="Maeda N."/>
            <person name="Oyama R."/>
            <person name="Ravasi T."/>
            <person name="Lenhard B."/>
            <person name="Wells C."/>
            <person name="Kodzius R."/>
            <person name="Shimokawa K."/>
            <person name="Bajic V.B."/>
            <person name="Brenner S.E."/>
            <person name="Batalov S."/>
            <person name="Forrest A.R."/>
            <person name="Zavolan M."/>
            <person name="Davis M.J."/>
            <person name="Wilming L.G."/>
            <person name="Aidinis V."/>
            <person name="Allen J.E."/>
            <person name="Ambesi-Impiombato A."/>
            <person name="Apweiler R."/>
            <person name="Aturaliya R.N."/>
            <person name="Bailey T.L."/>
            <person name="Bansal M."/>
            <person name="Baxter L."/>
            <person name="Beisel K.W."/>
            <person name="Bersano T."/>
            <person name="Bono H."/>
            <person name="Chalk A.M."/>
            <person name="Chiu K.P."/>
            <person name="Choudhary V."/>
            <person name="Christoffels A."/>
            <person name="Clutterbuck D.R."/>
            <person name="Crowe M.L."/>
            <person name="Dalla E."/>
            <person name="Dalrymple B.P."/>
            <person name="de Bono B."/>
            <person name="Della Gatta G."/>
            <person name="di Bernardo D."/>
            <person name="Down T."/>
            <person name="Engstrom P."/>
            <person name="Fagiolini M."/>
            <person name="Faulkner G."/>
            <person name="Fletcher C.F."/>
            <person name="Fukushima T."/>
            <person name="Furuno M."/>
            <person name="Futaki S."/>
            <person name="Gariboldi M."/>
            <person name="Georgii-Hemming P."/>
            <person name="Gingeras T.R."/>
            <person name="Gojobori T."/>
            <person name="Green R.E."/>
            <person name="Gustincich S."/>
            <person name="Harbers M."/>
            <person name="Hayashi Y."/>
            <person name="Hensch T.K."/>
            <person name="Hirokawa N."/>
            <person name="Hill D."/>
            <person name="Huminiecki L."/>
            <person name="Iacono M."/>
            <person name="Ikeo K."/>
            <person name="Iwama A."/>
            <person name="Ishikawa T."/>
            <person name="Jakt M."/>
            <person name="Kanapin A."/>
            <person name="Katoh M."/>
            <person name="Kawasawa Y."/>
            <person name="Kelso J."/>
            <person name="Kitamura H."/>
            <person name="Kitano H."/>
            <person name="Kollias G."/>
            <person name="Krishnan S.P."/>
            <person name="Kruger A."/>
            <person name="Kummerfeld S.K."/>
            <person name="Kurochkin I.V."/>
            <person name="Lareau L.F."/>
            <person name="Lazarevic D."/>
            <person name="Lipovich L."/>
            <person name="Liu J."/>
            <person name="Liuni S."/>
            <person name="McWilliam S."/>
            <person name="Madan Babu M."/>
            <person name="Madera M."/>
            <person name="Marchionni L."/>
            <person name="Matsuda H."/>
            <person name="Matsuzawa S."/>
            <person name="Miki H."/>
            <person name="Mignone F."/>
            <person name="Miyake S."/>
            <person name="Morris K."/>
            <person name="Mottagui-Tabar S."/>
            <person name="Mulder N."/>
            <person name="Nakano N."/>
            <person name="Nakauchi H."/>
            <person name="Ng P."/>
            <person name="Nilsson R."/>
            <person name="Nishiguchi S."/>
            <person name="Nishikawa S."/>
            <person name="Nori F."/>
            <person name="Ohara O."/>
            <person name="Okazaki Y."/>
            <person name="Orlando V."/>
            <person name="Pang K.C."/>
            <person name="Pavan W.J."/>
            <person name="Pavesi G."/>
            <person name="Pesole G."/>
            <person name="Petrovsky N."/>
            <person name="Piazza S."/>
            <person name="Reed J."/>
            <person name="Reid J.F."/>
            <person name="Ring B.Z."/>
            <person name="Ringwald M."/>
            <person name="Rost B."/>
            <person name="Ruan Y."/>
            <person name="Salzberg S.L."/>
            <person name="Sandelin A."/>
            <person name="Schneider C."/>
            <person name="Schoenbach C."/>
            <person name="Sekiguchi K."/>
            <person name="Semple C.A."/>
            <person name="Seno S."/>
            <person name="Sessa L."/>
            <person name="Sheng Y."/>
            <person name="Shibata Y."/>
            <person name="Shimada H."/>
            <person name="Shimada K."/>
            <person name="Silva D."/>
            <person name="Sinclair B."/>
            <person name="Sperling S."/>
            <person name="Stupka E."/>
            <person name="Sugiura K."/>
            <person name="Sultana R."/>
            <person name="Takenaka Y."/>
            <person name="Taki K."/>
            <person name="Tammoja K."/>
            <person name="Tan S.L."/>
            <person name="Tang S."/>
            <person name="Taylor M.S."/>
            <person name="Tegner J."/>
            <person name="Teichmann S.A."/>
            <person name="Ueda H.R."/>
            <person name="van Nimwegen E."/>
            <person name="Verardo R."/>
            <person name="Wei C.L."/>
            <person name="Yagi K."/>
            <person name="Yamanishi H."/>
            <person name="Zabarovsky E."/>
            <person name="Zhu S."/>
            <person name="Zimmer A."/>
            <person name="Hide W."/>
            <person name="Bult C."/>
            <person name="Grimmond S.M."/>
            <person name="Teasdale R.D."/>
            <person name="Liu E.T."/>
            <person name="Brusic V."/>
            <person name="Quackenbush J."/>
            <person name="Wahlestedt C."/>
            <person name="Mattick J.S."/>
            <person name="Hume D.A."/>
            <person name="Kai C."/>
            <person name="Sasaki D."/>
            <person name="Tomaru Y."/>
            <person name="Fukuda S."/>
            <person name="Kanamori-Katayama M."/>
            <person name="Suzuki M."/>
            <person name="Aoki J."/>
            <person name="Arakawa T."/>
            <person name="Iida J."/>
            <person name="Imamura K."/>
            <person name="Itoh M."/>
            <person name="Kato T."/>
            <person name="Kawaji H."/>
            <person name="Kawagashira N."/>
            <person name="Kawashima T."/>
            <person name="Kojima M."/>
            <person name="Kondo S."/>
            <person name="Konno H."/>
            <person name="Nakano K."/>
            <person name="Ninomiya N."/>
            <person name="Nishio T."/>
            <person name="Okada M."/>
            <person name="Plessy C."/>
            <person name="Shibata K."/>
            <person name="Shiraki T."/>
            <person name="Suzuki S."/>
            <person name="Tagami M."/>
            <person name="Waki K."/>
            <person name="Watahiki A."/>
            <person name="Okamura-Oho Y."/>
            <person name="Suzuki H."/>
            <person name="Kawai J."/>
            <person name="Hayashizaki Y."/>
        </authorList>
    </citation>
    <scope>NUCLEOTIDE SEQUENCE [LARGE SCALE MRNA]</scope>
    <source>
        <strain>C57BL/6J</strain>
        <tissue>Kidney</tissue>
        <tissue>Testis</tissue>
    </source>
</reference>
<reference key="2">
    <citation type="journal article" date="2004" name="Genome Res.">
        <title>The status, quality, and expansion of the NIH full-length cDNA project: the Mammalian Gene Collection (MGC).</title>
        <authorList>
            <consortium name="The MGC Project Team"/>
        </authorList>
    </citation>
    <scope>NUCLEOTIDE SEQUENCE [LARGE SCALE MRNA]</scope>
    <source>
        <tissue>Mammary tumor</tissue>
    </source>
</reference>
<reference key="3">
    <citation type="journal article" date="2010" name="Cell">
        <title>A tissue-specific atlas of mouse protein phosphorylation and expression.</title>
        <authorList>
            <person name="Huttlin E.L."/>
            <person name="Jedrychowski M.P."/>
            <person name="Elias J.E."/>
            <person name="Goswami T."/>
            <person name="Rad R."/>
            <person name="Beausoleil S.A."/>
            <person name="Villen J."/>
            <person name="Haas W."/>
            <person name="Sowa M.E."/>
            <person name="Gygi S.P."/>
        </authorList>
    </citation>
    <scope>IDENTIFICATION BY MASS SPECTROMETRY [LARGE SCALE ANALYSIS]</scope>
    <source>
        <tissue>Testis</tissue>
    </source>
</reference>
<comment type="function">
    <text evidence="1">Contributes to mitotic spindle assembly, maintenance of centrosome integrity and completion of cytokinesis as part of the HAUS augmin-like complex.</text>
</comment>
<comment type="subunit">
    <text evidence="2">Component of the HAUS augmin-like complex. The complex interacts with the gamma-tubulin ring complex and this interaction is required for spindle assembly. Associates with microtubules. The interaction with microtubules is strong during mitosis, while it is weak or absent during interphase. It is unclear whether this interaction is direct or indirect (By similarity). Interacts with EML3 (phosphorylated at 'Thr-882') (By similarity).</text>
</comment>
<comment type="subcellular location">
    <subcellularLocation>
        <location evidence="2">Cytoplasm</location>
    </subcellularLocation>
    <subcellularLocation>
        <location evidence="2">Cytoplasm</location>
        <location evidence="2">Cytoskeleton</location>
        <location evidence="2">Microtubule organizing center</location>
        <location evidence="2">Centrosome</location>
    </subcellularLocation>
    <subcellularLocation>
        <location evidence="2">Cytoplasm</location>
        <location evidence="2">Cytoskeleton</location>
        <location evidence="2">Spindle</location>
    </subcellularLocation>
    <subcellularLocation>
        <location evidence="2">Cytoplasm</location>
        <location evidence="2">Cytoskeleton</location>
        <location evidence="2">Spindle pole</location>
    </subcellularLocation>
    <text evidence="2">Localizes with the spindle poles in mitotic cells. In interphase, localized at the centrosome and diffusely in the cytoplasm. Localizes to mitotic spindle microtubules (By similarity).</text>
</comment>
<comment type="similarity">
    <text evidence="4">Belongs to the HAUS1 family.</text>
</comment>
<organism>
    <name type="scientific">Mus musculus</name>
    <name type="common">Mouse</name>
    <dbReference type="NCBI Taxonomy" id="10090"/>
    <lineage>
        <taxon>Eukaryota</taxon>
        <taxon>Metazoa</taxon>
        <taxon>Chordata</taxon>
        <taxon>Craniata</taxon>
        <taxon>Vertebrata</taxon>
        <taxon>Euteleostomi</taxon>
        <taxon>Mammalia</taxon>
        <taxon>Eutheria</taxon>
        <taxon>Euarchontoglires</taxon>
        <taxon>Glires</taxon>
        <taxon>Rodentia</taxon>
        <taxon>Myomorpha</taxon>
        <taxon>Muroidea</taxon>
        <taxon>Muridae</taxon>
        <taxon>Murinae</taxon>
        <taxon>Mus</taxon>
        <taxon>Mus</taxon>
    </lineage>
</organism>
<gene>
    <name type="primary">Haus1</name>
    <name type="synonym">Ccdc5</name>
</gene>
<dbReference type="EMBL" id="AK076912">
    <property type="protein sequence ID" value="BAC36526.1"/>
    <property type="molecule type" value="mRNA"/>
</dbReference>
<dbReference type="EMBL" id="AK146923">
    <property type="protein sequence ID" value="BAE27534.1"/>
    <property type="molecule type" value="mRNA"/>
</dbReference>
<dbReference type="EMBL" id="BC024400">
    <property type="protein sequence ID" value="AAH24400.1"/>
    <property type="molecule type" value="mRNA"/>
</dbReference>
<dbReference type="CCDS" id="CCDS29357.1"/>
<dbReference type="RefSeq" id="NP_666201.1">
    <property type="nucleotide sequence ID" value="NM_146089.3"/>
</dbReference>
<dbReference type="SMR" id="Q8BHX1"/>
<dbReference type="BioGRID" id="230424">
    <property type="interactions" value="44"/>
</dbReference>
<dbReference type="FunCoup" id="Q8BHX1">
    <property type="interactions" value="699"/>
</dbReference>
<dbReference type="IntAct" id="Q8BHX1">
    <property type="interactions" value="42"/>
</dbReference>
<dbReference type="MINT" id="Q8BHX1"/>
<dbReference type="STRING" id="10090.ENSMUSP00000035826"/>
<dbReference type="iPTMnet" id="Q8BHX1"/>
<dbReference type="PhosphoSitePlus" id="Q8BHX1"/>
<dbReference type="jPOST" id="Q8BHX1"/>
<dbReference type="PaxDb" id="10090-ENSMUSP00000035826"/>
<dbReference type="PeptideAtlas" id="Q8BHX1"/>
<dbReference type="ProteomicsDB" id="270937"/>
<dbReference type="Pumba" id="Q8BHX1"/>
<dbReference type="Antibodypedia" id="22454">
    <property type="antibodies" value="99 antibodies from 19 providers"/>
</dbReference>
<dbReference type="DNASU" id="225745"/>
<dbReference type="Ensembl" id="ENSMUST00000048192.9">
    <property type="protein sequence ID" value="ENSMUSP00000035826.8"/>
    <property type="gene ID" value="ENSMUSG00000041840.9"/>
</dbReference>
<dbReference type="GeneID" id="225745"/>
<dbReference type="KEGG" id="mmu:225745"/>
<dbReference type="UCSC" id="uc008frs.1">
    <property type="organism name" value="mouse"/>
</dbReference>
<dbReference type="AGR" id="MGI:2385076"/>
<dbReference type="CTD" id="115106"/>
<dbReference type="MGI" id="MGI:2385076">
    <property type="gene designation" value="Haus1"/>
</dbReference>
<dbReference type="VEuPathDB" id="HostDB:ENSMUSG00000041840"/>
<dbReference type="eggNOG" id="ENOG502QSQA">
    <property type="taxonomic scope" value="Eukaryota"/>
</dbReference>
<dbReference type="GeneTree" id="ENSGT00390000006029"/>
<dbReference type="HOGENOM" id="CLU_063322_0_0_1"/>
<dbReference type="InParanoid" id="Q8BHX1"/>
<dbReference type="PhylomeDB" id="Q8BHX1"/>
<dbReference type="TreeFam" id="TF331717"/>
<dbReference type="Reactome" id="R-MMU-2565942">
    <property type="pathway name" value="Regulation of PLK1 Activity at G2/M Transition"/>
</dbReference>
<dbReference type="Reactome" id="R-MMU-380259">
    <property type="pathway name" value="Loss of Nlp from mitotic centrosomes"/>
</dbReference>
<dbReference type="Reactome" id="R-MMU-380270">
    <property type="pathway name" value="Recruitment of mitotic centrosome proteins and complexes"/>
</dbReference>
<dbReference type="Reactome" id="R-MMU-380284">
    <property type="pathway name" value="Loss of proteins required for interphase microtubule organization from the centrosome"/>
</dbReference>
<dbReference type="Reactome" id="R-MMU-380320">
    <property type="pathway name" value="Recruitment of NuMA to mitotic centrosomes"/>
</dbReference>
<dbReference type="Reactome" id="R-MMU-5620912">
    <property type="pathway name" value="Anchoring of the basal body to the plasma membrane"/>
</dbReference>
<dbReference type="Reactome" id="R-MMU-8854518">
    <property type="pathway name" value="AURKA Activation by TPX2"/>
</dbReference>
<dbReference type="BioGRID-ORCS" id="225745">
    <property type="hits" value="26 hits in 75 CRISPR screens"/>
</dbReference>
<dbReference type="ChiTaRS" id="Haus1">
    <property type="organism name" value="mouse"/>
</dbReference>
<dbReference type="PRO" id="PR:Q8BHX1"/>
<dbReference type="Proteomes" id="UP000000589">
    <property type="component" value="Chromosome 18"/>
</dbReference>
<dbReference type="RNAct" id="Q8BHX1">
    <property type="molecule type" value="protein"/>
</dbReference>
<dbReference type="Bgee" id="ENSMUSG00000041840">
    <property type="expression patterns" value="Expressed in spermatid and 79 other cell types or tissues"/>
</dbReference>
<dbReference type="ExpressionAtlas" id="Q8BHX1">
    <property type="expression patterns" value="baseline and differential"/>
</dbReference>
<dbReference type="GO" id="GO:0005813">
    <property type="term" value="C:centrosome"/>
    <property type="evidence" value="ECO:0007669"/>
    <property type="project" value="UniProtKB-SubCell"/>
</dbReference>
<dbReference type="GO" id="GO:0005829">
    <property type="term" value="C:cytosol"/>
    <property type="evidence" value="ECO:0007669"/>
    <property type="project" value="Ensembl"/>
</dbReference>
<dbReference type="GO" id="GO:0070652">
    <property type="term" value="C:HAUS complex"/>
    <property type="evidence" value="ECO:0000250"/>
    <property type="project" value="UniProtKB"/>
</dbReference>
<dbReference type="GO" id="GO:1990498">
    <property type="term" value="C:mitotic spindle microtubule"/>
    <property type="evidence" value="ECO:0000250"/>
    <property type="project" value="UniProtKB"/>
</dbReference>
<dbReference type="GO" id="GO:0000922">
    <property type="term" value="C:spindle pole"/>
    <property type="evidence" value="ECO:0007669"/>
    <property type="project" value="UniProtKB-SubCell"/>
</dbReference>
<dbReference type="GO" id="GO:0051301">
    <property type="term" value="P:cell division"/>
    <property type="evidence" value="ECO:0007669"/>
    <property type="project" value="UniProtKB-KW"/>
</dbReference>
<dbReference type="GO" id="GO:0007098">
    <property type="term" value="P:centrosome cycle"/>
    <property type="evidence" value="ECO:0000250"/>
    <property type="project" value="UniProtKB"/>
</dbReference>
<dbReference type="GO" id="GO:0051225">
    <property type="term" value="P:spindle assembly"/>
    <property type="evidence" value="ECO:0000250"/>
    <property type="project" value="UniProtKB"/>
</dbReference>
<dbReference type="InterPro" id="IPR026243">
    <property type="entry name" value="HAUS1"/>
</dbReference>
<dbReference type="PANTHER" id="PTHR31570">
    <property type="entry name" value="HAUS AUGMIN-LIKE COMPLEX SUBUNIT 1"/>
    <property type="match status" value="1"/>
</dbReference>
<dbReference type="PANTHER" id="PTHR31570:SF1">
    <property type="entry name" value="HAUS AUGMIN-LIKE COMPLEX SUBUNIT 1"/>
    <property type="match status" value="1"/>
</dbReference>
<dbReference type="PRINTS" id="PR02087">
    <property type="entry name" value="HAUSAUGMINL1"/>
</dbReference>
<sequence length="278" mass="31379">MAAPEEKALQVAEWLKKVFGDHPIPQYEMNSRTTEILYHLSERNRVRDRDISLVIEDLKQKASEYESEAKRLEDFLMESVNFSPANLSKSGSRFLNALVDSAIALEIKDTSLASFIPAVNDLTSDLFRTKSKSEEMKLELGKLEKNLTATLVLEKCLREDLKKAELQLSAEKAKVDSRLQNMDFLKAKAAEFRFGIKAAEEQLSARGMDASLSHRSLAALSEKLSELKEQTIPLKKKLESYLDLMPSPSLAQLKIEEAKRELDAIEAELTKKVDMMGL</sequence>
<protein>
    <recommendedName>
        <fullName>HAUS augmin-like complex subunit 1</fullName>
    </recommendedName>
    <alternativeName>
        <fullName>Coiled-coil domain-containing protein 5</fullName>
    </alternativeName>
</protein>
<keyword id="KW-0131">Cell cycle</keyword>
<keyword id="KW-0132">Cell division</keyword>
<keyword id="KW-0175">Coiled coil</keyword>
<keyword id="KW-0963">Cytoplasm</keyword>
<keyword id="KW-0206">Cytoskeleton</keyword>
<keyword id="KW-0493">Microtubule</keyword>
<keyword id="KW-0498">Mitosis</keyword>
<keyword id="KW-1185">Reference proteome</keyword>
<feature type="chain" id="PRO_0000089396" description="HAUS augmin-like complex subunit 1">
    <location>
        <begin position="1"/>
        <end position="278"/>
    </location>
</feature>
<feature type="coiled-coil region" evidence="3">
    <location>
        <begin position="49"/>
        <end position="79"/>
    </location>
</feature>
<feature type="coiled-coil region" evidence="3">
    <location>
        <begin position="128"/>
        <end position="178"/>
    </location>
</feature>
<feature type="coiled-coil region" evidence="3">
    <location>
        <begin position="249"/>
        <end position="277"/>
    </location>
</feature>
<feature type="sequence conflict" description="In Ref. 1; BAC36526." evidence="4" ref="1">
    <original>E</original>
    <variation>K</variation>
    <location>
        <position position="159"/>
    </location>
</feature>
<accession>Q8BHX1</accession>
<accession>Q3UIH2</accession>
<accession>Q8R1M1</accession>
<name>HAUS1_MOUSE</name>
<evidence type="ECO:0000250" key="1"/>
<evidence type="ECO:0000250" key="2">
    <source>
        <dbReference type="UniProtKB" id="Q96CS2"/>
    </source>
</evidence>
<evidence type="ECO:0000255" key="3"/>
<evidence type="ECO:0000305" key="4"/>